<protein>
    <recommendedName>
        <fullName evidence="7">Putative monoterpene synthase 8</fullName>
    </recommendedName>
</protein>
<feature type="transit peptide" description="Chloroplast" evidence="5">
    <location>
        <begin position="1"/>
        <end position="44"/>
    </location>
</feature>
<feature type="chain" id="PRO_0000455261" description="Putative monoterpene synthase 8">
    <location>
        <begin position="45"/>
        <end position="580"/>
    </location>
</feature>
<feature type="short sequence motif" description="DDXXD motif" evidence="8">
    <location>
        <begin position="333"/>
        <end position="337"/>
    </location>
</feature>
<feature type="binding site" evidence="3">
    <location>
        <position position="333"/>
    </location>
    <ligand>
        <name>Mg(2+)</name>
        <dbReference type="ChEBI" id="CHEBI:18420"/>
        <label>1</label>
    </ligand>
</feature>
<feature type="binding site" evidence="3">
    <location>
        <position position="333"/>
    </location>
    <ligand>
        <name>Mg(2+)</name>
        <dbReference type="ChEBI" id="CHEBI:18420"/>
        <label>2</label>
    </ligand>
</feature>
<feature type="binding site" evidence="3">
    <location>
        <position position="337"/>
    </location>
    <ligand>
        <name>Mg(2+)</name>
        <dbReference type="ChEBI" id="CHEBI:18420"/>
        <label>1</label>
    </ligand>
</feature>
<feature type="binding site" evidence="3">
    <location>
        <position position="337"/>
    </location>
    <ligand>
        <name>Mg(2+)</name>
        <dbReference type="ChEBI" id="CHEBI:18420"/>
        <label>2</label>
    </ligand>
</feature>
<feature type="binding site" evidence="3">
    <location>
        <position position="478"/>
    </location>
    <ligand>
        <name>Mg(2+)</name>
        <dbReference type="ChEBI" id="CHEBI:18420"/>
        <label>3</label>
    </ligand>
</feature>
<feature type="binding site" evidence="3">
    <location>
        <position position="482"/>
    </location>
    <ligand>
        <name>Mg(2+)</name>
        <dbReference type="ChEBI" id="CHEBI:18420"/>
        <label>3</label>
    </ligand>
</feature>
<feature type="binding site" evidence="3">
    <location>
        <position position="486"/>
    </location>
    <ligand>
        <name>Mg(2+)</name>
        <dbReference type="ChEBI" id="CHEBI:18420"/>
        <label>3</label>
    </ligand>
</feature>
<feature type="sequence conflict" description="In Ref. 1; CCM43930." evidence="8" ref="1">
    <original>E</original>
    <variation>V</variation>
    <location>
        <position position="420"/>
    </location>
</feature>
<feature type="sequence conflict" description="In Ref. 1; CCM43930." evidence="8" ref="1">
    <original>A</original>
    <variation>E</variation>
    <location>
        <position position="428"/>
    </location>
</feature>
<evidence type="ECO:0000250" key="1">
    <source>
        <dbReference type="UniProtKB" id="A0A1C9J6A7"/>
    </source>
</evidence>
<evidence type="ECO:0000250" key="2">
    <source>
        <dbReference type="UniProtKB" id="A0A6P6W6H5"/>
    </source>
</evidence>
<evidence type="ECO:0000250" key="3">
    <source>
        <dbReference type="UniProtKB" id="Q40577"/>
    </source>
</evidence>
<evidence type="ECO:0000250" key="4">
    <source>
        <dbReference type="UniProtKB" id="Q6JD73"/>
    </source>
</evidence>
<evidence type="ECO:0000255" key="5"/>
<evidence type="ECO:0000269" key="6">
    <source>
    </source>
</evidence>
<evidence type="ECO:0000303" key="7">
    <source>
    </source>
</evidence>
<evidence type="ECO:0000305" key="8"/>
<accession>R4YVJ8</accession>
<accession>A0A6P6SDD0</accession>
<organism>
    <name type="scientific">Coffea arabica</name>
    <name type="common">Arabian coffee</name>
    <dbReference type="NCBI Taxonomy" id="13443"/>
    <lineage>
        <taxon>Eukaryota</taxon>
        <taxon>Viridiplantae</taxon>
        <taxon>Streptophyta</taxon>
        <taxon>Embryophyta</taxon>
        <taxon>Tracheophyta</taxon>
        <taxon>Spermatophyta</taxon>
        <taxon>Magnoliopsida</taxon>
        <taxon>eudicotyledons</taxon>
        <taxon>Gunneridae</taxon>
        <taxon>Pentapetalae</taxon>
        <taxon>asterids</taxon>
        <taxon>lamiids</taxon>
        <taxon>Gentianales</taxon>
        <taxon>Rubiaceae</taxon>
        <taxon>Ixoroideae</taxon>
        <taxon>Gardenieae complex</taxon>
        <taxon>Bertiereae - Coffeeae clade</taxon>
        <taxon>Coffeeae</taxon>
        <taxon>Coffea</taxon>
    </lineage>
</organism>
<gene>
    <name evidence="7" type="primary">TPS8</name>
</gene>
<sequence>MACTSNLSSLSKSWAVLDVPRGAPKATGLWLKRQFIFKTSRICMCMPTPTATQPIATPLIRDNESLLKYLRQPSVLPHEVDDSRKELLGRTRRQLRSTSEPLKAMNLIDTLQRLGLAYHFEDDMNAILSQLSSSGQSDGDLLTTALRFRLLRHNGHKIVQKFMDKNGKFKDSLKEDTMGLLSLYEASHLAANGEDILLEAMELTEAHLKQSLPSLPTQLARKVSSALELPRHRRMARLEARRYIQEYSEEIGHDPNLLELAKLDYNKVQSLHQMELTEISRWWKQLGLVDKLTFARDRPLECFLWTVGILPEPKYSNCRIELAKTIAILLVIDDIFDTHGTIDELVLFTNAIRRWDLEAMEGLPEYMRICYMALYNTTNEICYKILKENGWSVLPYLKATWIDMIEGFMLEASWYNNGQEPNMEEYVANGVTTAGAYMAMVHLFFLIGQGVTEENVKLLMKPYPKLFSCSGRILRLWDDLGTAKEEQERGDLASSIQLFMRENNITCDEEGRKRILQLIDNLWKDLNWELVSRDAMPLAIIKAAFNMARSSQVVYQHEEESYFSSVDNYVESLFFTPIIN</sequence>
<keyword id="KW-0150">Chloroplast</keyword>
<keyword id="KW-0460">Magnesium</keyword>
<keyword id="KW-0479">Metal-binding</keyword>
<keyword id="KW-0934">Plastid</keyword>
<keyword id="KW-1185">Reference proteome</keyword>
<keyword id="KW-0809">Transit peptide</keyword>
<reference key="1">
    <citation type="journal article" date="2013" name="Phytochemistry">
        <title>Functional characterization of three Coffea arabica L. monoterpene synthases: insights into the enzymatic machinery of coffee aroma.</title>
        <authorList>
            <person name="Del Terra L."/>
            <person name="Lonzarich V."/>
            <person name="Asquini E."/>
            <person name="Navarini L."/>
            <person name="Graziosi G."/>
            <person name="Suggi Liverani F."/>
            <person name="Pallavicini A."/>
        </authorList>
    </citation>
    <scope>NUCLEOTIDE SEQUENCE [MRNA]</scope>
    <scope>TISSUE SPECIFICITY</scope>
    <source>
        <strain>cv. Catuai Red</strain>
        <tissue>Flower</tissue>
        <tissue>Fruit</tissue>
        <tissue>Seed</tissue>
    </source>
</reference>
<reference key="2">
    <citation type="submission" date="2018-10" db="EMBL/GenBank/DDBJ databases">
        <title>The Coffea arabica cultivar Caturra genome provides a strong foundation for breeding and functional genomics studies in coffee.</title>
        <authorList>
            <person name="Zimin A.V."/>
            <person name="Yepes M."/>
            <person name="Maldonado C.E."/>
            <person name="Navarro L."/>
            <person name="Kovaka S."/>
            <person name="Pertea M."/>
            <person name="Gaitan A."/>
            <person name="Aldwinckle H."/>
        </authorList>
    </citation>
    <scope>NUCLEOTIDE SEQUENCE [LARGE SCALE GENOMIC DNA]</scope>
    <source>
        <strain>cv. Caturra red</strain>
    </source>
</reference>
<dbReference type="EMBL" id="HE985295">
    <property type="protein sequence ID" value="CCM43930.1"/>
    <property type="molecule type" value="mRNA"/>
</dbReference>
<dbReference type="SMR" id="R4YVJ8"/>
<dbReference type="UniPathway" id="UPA00213"/>
<dbReference type="Proteomes" id="UP000515148">
    <property type="component" value="Unplaced"/>
</dbReference>
<dbReference type="GO" id="GO:0009507">
    <property type="term" value="C:chloroplast"/>
    <property type="evidence" value="ECO:0007669"/>
    <property type="project" value="UniProtKB-SubCell"/>
</dbReference>
<dbReference type="GO" id="GO:0000287">
    <property type="term" value="F:magnesium ion binding"/>
    <property type="evidence" value="ECO:0007669"/>
    <property type="project" value="InterPro"/>
</dbReference>
<dbReference type="GO" id="GO:0010333">
    <property type="term" value="F:terpene synthase activity"/>
    <property type="evidence" value="ECO:0007669"/>
    <property type="project" value="InterPro"/>
</dbReference>
<dbReference type="GO" id="GO:0016102">
    <property type="term" value="P:diterpenoid biosynthetic process"/>
    <property type="evidence" value="ECO:0007669"/>
    <property type="project" value="InterPro"/>
</dbReference>
<dbReference type="CDD" id="cd00684">
    <property type="entry name" value="Terpene_cyclase_plant_C1"/>
    <property type="match status" value="1"/>
</dbReference>
<dbReference type="FunFam" id="1.10.600.10:FF:000007">
    <property type="entry name" value="Isoprene synthase, chloroplastic"/>
    <property type="match status" value="1"/>
</dbReference>
<dbReference type="Gene3D" id="1.10.600.10">
    <property type="entry name" value="Farnesyl Diphosphate Synthase"/>
    <property type="match status" value="1"/>
</dbReference>
<dbReference type="Gene3D" id="1.50.10.130">
    <property type="entry name" value="Terpene synthase, N-terminal domain"/>
    <property type="match status" value="1"/>
</dbReference>
<dbReference type="InterPro" id="IPR008949">
    <property type="entry name" value="Isoprenoid_synthase_dom_sf"/>
</dbReference>
<dbReference type="InterPro" id="IPR034741">
    <property type="entry name" value="Terpene_cyclase-like_1_C"/>
</dbReference>
<dbReference type="InterPro" id="IPR044814">
    <property type="entry name" value="Terpene_cyclase_plant_C1"/>
</dbReference>
<dbReference type="InterPro" id="IPR001906">
    <property type="entry name" value="Terpene_synth_N"/>
</dbReference>
<dbReference type="InterPro" id="IPR036965">
    <property type="entry name" value="Terpene_synth_N_sf"/>
</dbReference>
<dbReference type="InterPro" id="IPR050148">
    <property type="entry name" value="Terpene_synthase-like"/>
</dbReference>
<dbReference type="InterPro" id="IPR005630">
    <property type="entry name" value="Terpene_synthase_metal-bd"/>
</dbReference>
<dbReference type="InterPro" id="IPR008930">
    <property type="entry name" value="Terpenoid_cyclase/PrenylTrfase"/>
</dbReference>
<dbReference type="PANTHER" id="PTHR31225">
    <property type="entry name" value="OS04G0344100 PROTEIN-RELATED"/>
    <property type="match status" value="1"/>
</dbReference>
<dbReference type="PANTHER" id="PTHR31225:SF137">
    <property type="entry name" value="TERPENE SYNTHASE 11-RELATED"/>
    <property type="match status" value="1"/>
</dbReference>
<dbReference type="Pfam" id="PF01397">
    <property type="entry name" value="Terpene_synth"/>
    <property type="match status" value="1"/>
</dbReference>
<dbReference type="Pfam" id="PF03936">
    <property type="entry name" value="Terpene_synth_C"/>
    <property type="match status" value="1"/>
</dbReference>
<dbReference type="SFLD" id="SFLDS00005">
    <property type="entry name" value="Isoprenoid_Synthase_Type_I"/>
    <property type="match status" value="1"/>
</dbReference>
<dbReference type="SFLD" id="SFLDG01019">
    <property type="entry name" value="Terpene_Cyclase_Like_1_C_Termi"/>
    <property type="match status" value="1"/>
</dbReference>
<dbReference type="SUPFAM" id="SSF48239">
    <property type="entry name" value="Terpenoid cyclases/Protein prenyltransferases"/>
    <property type="match status" value="1"/>
</dbReference>
<dbReference type="SUPFAM" id="SSF48576">
    <property type="entry name" value="Terpenoid synthases"/>
    <property type="match status" value="1"/>
</dbReference>
<name>TPS8_COFAR</name>
<proteinExistence type="evidence at transcript level"/>
<comment type="function">
    <text evidence="2">Monoterpene synthase (mono-TPS) involved in the biosynthesis of monoterpenes natural products, constituent of coffee beverage aroma.</text>
</comment>
<comment type="cofactor">
    <cofactor evidence="1">
        <name>Mg(2+)</name>
        <dbReference type="ChEBI" id="CHEBI:18420"/>
    </cofactor>
    <cofactor evidence="1">
        <name>Mn(2+)</name>
        <dbReference type="ChEBI" id="CHEBI:29035"/>
    </cofactor>
    <text evidence="1">Binds 3 Mg(2+) or Mn(2+) ions per subunit.</text>
</comment>
<comment type="pathway">
    <text evidence="2">Secondary metabolite biosynthesis; terpenoid biosynthesis.</text>
</comment>
<comment type="subunit">
    <text evidence="4">Monomer.</text>
</comment>
<comment type="subcellular location">
    <subcellularLocation>
        <location evidence="5">Plastid</location>
        <location evidence="5">Chloroplast</location>
    </subcellularLocation>
</comment>
<comment type="tissue specificity">
    <text evidence="6">Confined to flowers.</text>
</comment>
<comment type="domain">
    <text evidence="8">The Asp-Asp-Xaa-Xaa-Asp/Glu (DDXXD/E) motif is important for the catalytic activity, presumably through binding to Mg(2+).</text>
</comment>
<comment type="similarity">
    <text evidence="8">Belongs to the terpene synthase family. Tpsg subfamily.</text>
</comment>